<dbReference type="EC" id="5.4.2.2" evidence="3"/>
<dbReference type="EMBL" id="AJ240053">
    <property type="protein sequence ID" value="CAB93680.1"/>
    <property type="molecule type" value="mRNA"/>
</dbReference>
<dbReference type="RefSeq" id="NP_001275281.1">
    <property type="nucleotide sequence ID" value="NM_001288352.1"/>
</dbReference>
<dbReference type="SMR" id="Q9M4G5"/>
<dbReference type="FunCoup" id="Q9M4G5">
    <property type="interactions" value="2060"/>
</dbReference>
<dbReference type="STRING" id="4113.Q9M4G5"/>
<dbReference type="GeneID" id="102585015"/>
<dbReference type="KEGG" id="sot:102585015"/>
<dbReference type="InParanoid" id="Q9M4G5"/>
<dbReference type="OrthoDB" id="1267167at2759"/>
<dbReference type="Proteomes" id="UP000011115">
    <property type="component" value="Unassembled WGS sequence"/>
</dbReference>
<dbReference type="GO" id="GO:0009507">
    <property type="term" value="C:chloroplast"/>
    <property type="evidence" value="ECO:0007669"/>
    <property type="project" value="UniProtKB-SubCell"/>
</dbReference>
<dbReference type="GO" id="GO:0005829">
    <property type="term" value="C:cytosol"/>
    <property type="evidence" value="ECO:0000318"/>
    <property type="project" value="GO_Central"/>
</dbReference>
<dbReference type="GO" id="GO:0000287">
    <property type="term" value="F:magnesium ion binding"/>
    <property type="evidence" value="ECO:0007669"/>
    <property type="project" value="InterPro"/>
</dbReference>
<dbReference type="GO" id="GO:0004614">
    <property type="term" value="F:phosphoglucomutase activity"/>
    <property type="evidence" value="ECO:0000318"/>
    <property type="project" value="GO_Central"/>
</dbReference>
<dbReference type="GO" id="GO:0005975">
    <property type="term" value="P:carbohydrate metabolic process"/>
    <property type="evidence" value="ECO:0000318"/>
    <property type="project" value="GO_Central"/>
</dbReference>
<dbReference type="GO" id="GO:0006006">
    <property type="term" value="P:glucose metabolic process"/>
    <property type="evidence" value="ECO:0007669"/>
    <property type="project" value="UniProtKB-KW"/>
</dbReference>
<dbReference type="CDD" id="cd03085">
    <property type="entry name" value="PGM1"/>
    <property type="match status" value="1"/>
</dbReference>
<dbReference type="FunFam" id="3.30.310.50:FF:000002">
    <property type="entry name" value="Phosphoglucomutase 5"/>
    <property type="match status" value="1"/>
</dbReference>
<dbReference type="FunFam" id="3.40.120.10:FF:000004">
    <property type="entry name" value="Phosphoglucomutase 5"/>
    <property type="match status" value="1"/>
</dbReference>
<dbReference type="FunFam" id="3.40.120.10:FF:000005">
    <property type="entry name" value="Phosphoglucomutase 5"/>
    <property type="match status" value="1"/>
</dbReference>
<dbReference type="FunFam" id="3.40.120.10:FF:000009">
    <property type="entry name" value="Phosphoglucomutase, cytoplasmic 1"/>
    <property type="match status" value="1"/>
</dbReference>
<dbReference type="Gene3D" id="3.40.120.10">
    <property type="entry name" value="Alpha-D-Glucose-1,6-Bisphosphate, subunit A, domain 3"/>
    <property type="match status" value="3"/>
</dbReference>
<dbReference type="Gene3D" id="3.30.310.50">
    <property type="entry name" value="Alpha-D-phosphohexomutase, C-terminal domain"/>
    <property type="match status" value="1"/>
</dbReference>
<dbReference type="InterPro" id="IPR005844">
    <property type="entry name" value="A-D-PHexomutase_a/b/a-I"/>
</dbReference>
<dbReference type="InterPro" id="IPR016055">
    <property type="entry name" value="A-D-PHexomutase_a/b/a-I/II/III"/>
</dbReference>
<dbReference type="InterPro" id="IPR005845">
    <property type="entry name" value="A-D-PHexomutase_a/b/a-II"/>
</dbReference>
<dbReference type="InterPro" id="IPR005846">
    <property type="entry name" value="A-D-PHexomutase_a/b/a-III"/>
</dbReference>
<dbReference type="InterPro" id="IPR036900">
    <property type="entry name" value="A-D-PHexomutase_C_sf"/>
</dbReference>
<dbReference type="InterPro" id="IPR016066">
    <property type="entry name" value="A-D-PHexomutase_CS"/>
</dbReference>
<dbReference type="InterPro" id="IPR005841">
    <property type="entry name" value="Alpha-D-phosphohexomutase_SF"/>
</dbReference>
<dbReference type="InterPro" id="IPR045244">
    <property type="entry name" value="PGM"/>
</dbReference>
<dbReference type="NCBIfam" id="NF005737">
    <property type="entry name" value="PRK07564.1-1"/>
    <property type="match status" value="1"/>
</dbReference>
<dbReference type="PANTHER" id="PTHR22573:SF59">
    <property type="entry name" value="PHOSPHOGLUCOMUTASE, CHLOROPLASTIC"/>
    <property type="match status" value="1"/>
</dbReference>
<dbReference type="PANTHER" id="PTHR22573">
    <property type="entry name" value="PHOSPHOHEXOMUTASE FAMILY MEMBER"/>
    <property type="match status" value="1"/>
</dbReference>
<dbReference type="Pfam" id="PF24947">
    <property type="entry name" value="PGM1_C_vert_fung"/>
    <property type="match status" value="1"/>
</dbReference>
<dbReference type="Pfam" id="PF02878">
    <property type="entry name" value="PGM_PMM_I"/>
    <property type="match status" value="1"/>
</dbReference>
<dbReference type="Pfam" id="PF02879">
    <property type="entry name" value="PGM_PMM_II"/>
    <property type="match status" value="1"/>
</dbReference>
<dbReference type="Pfam" id="PF02880">
    <property type="entry name" value="PGM_PMM_III"/>
    <property type="match status" value="1"/>
</dbReference>
<dbReference type="PRINTS" id="PR00509">
    <property type="entry name" value="PGMPMM"/>
</dbReference>
<dbReference type="SUPFAM" id="SSF55957">
    <property type="entry name" value="Phosphoglucomutase, C-terminal domain"/>
    <property type="match status" value="1"/>
</dbReference>
<dbReference type="SUPFAM" id="SSF53738">
    <property type="entry name" value="Phosphoglucomutase, first 3 domains"/>
    <property type="match status" value="3"/>
</dbReference>
<dbReference type="PROSITE" id="PS00710">
    <property type="entry name" value="PGM_PMM"/>
    <property type="match status" value="1"/>
</dbReference>
<comment type="function">
    <text evidence="2 3">Catalyzes the reversible isomerization of alpha-D-glucose 1-phosphate to alpha-D-glucose 6-phosphate (By similarity). The mechanism proceeds via the intermediate compound alpha-D-glucose 1,6-bisphosphate (By similarity). This enzyme participates in both the breakdown and synthesis of glucose (By similarity). Promotes gravitropic responses, negative in shoots but positive in roots, by facilitating starch granules (statoliths) formation (By similarity).</text>
</comment>
<comment type="catalytic activity">
    <reaction evidence="3">
        <text>alpha-D-glucose 1-phosphate = alpha-D-glucose 6-phosphate</text>
        <dbReference type="Rhea" id="RHEA:23536"/>
        <dbReference type="ChEBI" id="CHEBI:58225"/>
        <dbReference type="ChEBI" id="CHEBI:58601"/>
        <dbReference type="EC" id="5.4.2.2"/>
    </reaction>
</comment>
<comment type="catalytic activity">
    <reaction evidence="3">
        <text>O-phospho-L-seryl-[protein] + alpha-D-glucose 1-phosphate = alpha-D-glucose 1,6-bisphosphate + L-seryl-[protein]</text>
        <dbReference type="Rhea" id="RHEA:68748"/>
        <dbReference type="Rhea" id="RHEA-COMP:9863"/>
        <dbReference type="Rhea" id="RHEA-COMP:11604"/>
        <dbReference type="ChEBI" id="CHEBI:29999"/>
        <dbReference type="ChEBI" id="CHEBI:58392"/>
        <dbReference type="ChEBI" id="CHEBI:58601"/>
        <dbReference type="ChEBI" id="CHEBI:83421"/>
    </reaction>
</comment>
<comment type="catalytic activity">
    <reaction evidence="3">
        <text>alpha-D-glucose 1,6-bisphosphate + L-seryl-[protein] = O-phospho-L-seryl-[protein] + alpha-D-glucose 6-phosphate</text>
        <dbReference type="Rhea" id="RHEA:68752"/>
        <dbReference type="Rhea" id="RHEA-COMP:9863"/>
        <dbReference type="Rhea" id="RHEA-COMP:11604"/>
        <dbReference type="ChEBI" id="CHEBI:29999"/>
        <dbReference type="ChEBI" id="CHEBI:58225"/>
        <dbReference type="ChEBI" id="CHEBI:58392"/>
        <dbReference type="ChEBI" id="CHEBI:83421"/>
    </reaction>
</comment>
<comment type="cofactor">
    <cofactor evidence="1">
        <name>Mg(2+)</name>
        <dbReference type="ChEBI" id="CHEBI:18420"/>
    </cofactor>
    <text evidence="1">Binds 1 Mg(2+) ion per subunit.</text>
</comment>
<comment type="activity regulation">
    <text evidence="3">Inhibited by the Calvin cycle intermediates fructose-1,6-bisphosphate and ribulose-1,5-bisphosphate.</text>
</comment>
<comment type="subunit">
    <text evidence="1">Monomer.</text>
</comment>
<comment type="subcellular location">
    <subcellularLocation>
        <location evidence="4">Plastid</location>
        <location evidence="4">Chloroplast</location>
    </subcellularLocation>
</comment>
<comment type="similarity">
    <text evidence="5">Belongs to the phosphohexose mutase family.</text>
</comment>
<name>PGMP_SOLTU</name>
<protein>
    <recommendedName>
        <fullName>Phosphoglucomutase, chloroplastic</fullName>
        <shortName>PGM</shortName>
        <ecNumber evidence="3">5.4.2.2</ecNumber>
    </recommendedName>
    <alternativeName>
        <fullName>Glucose phosphomutase</fullName>
    </alternativeName>
</protein>
<keyword id="KW-0119">Carbohydrate metabolism</keyword>
<keyword id="KW-0150">Chloroplast</keyword>
<keyword id="KW-0313">Glucose metabolism</keyword>
<keyword id="KW-0413">Isomerase</keyword>
<keyword id="KW-0460">Magnesium</keyword>
<keyword id="KW-0479">Metal-binding</keyword>
<keyword id="KW-0597">Phosphoprotein</keyword>
<keyword id="KW-0934">Plastid</keyword>
<keyword id="KW-1185">Reference proteome</keyword>
<keyword id="KW-0809">Transit peptide</keyword>
<accession>Q9M4G5</accession>
<reference key="1">
    <citation type="thesis" date="1999" institute="Freie Universitaet Berlin" country="Germany">
        <authorList>
            <person name="Tauberger E."/>
        </authorList>
    </citation>
    <scope>NUCLEOTIDE SEQUENCE [MRNA]</scope>
    <source>
        <tissue>Tuber</tissue>
    </source>
</reference>
<sequence length="632" mass="68906">MAMESALTSTRVSIPSLCSGISSSHHHHRSLSFLNFPKLSSFKYSFRTISPVPFVVSASSVSPSSPSTSVAQSQDLKIKSVPTKPIEGQKTGTSGLRKKVKVFMQDNYLANWIQALFNSLPLEDYKNGLLVLGGDGRYFNREAAQIIIKIAAGNGVGKILVGKDGILSTQAVSAVIRKREANGGFIMSASHNPGGPEYDWGIKFNYSSGQPAPESITDKIYGNTLSISEIKIADIPDVDLSQLGVTKYGNFSVEVVDPVADYLELMENVFDFSLIRSLVSRPDFRFVFDAMHAVTGAYAKPIFVDKLGASLESIANGVPLEDFGHGHPDPNLTYAEDLVNILYGENGPDFGAASDGDGDRNMILGRSFFVTPSDSVAIIAAQCQYAIHYFQSGPKGLARSMPTSGSLDRVAQKLNLPFFEVPTGWKFFGNLMDAGKLSICGEESFGTGSDHIREKDGIWAVLAWLSILAYRNKDKKSGEKLVSVADVVKDHWATYGRNFFSRYDYEECESEGANNMIEYLRDLISKSKAGDKYGSYSLDFADDFAYTDPVDGSVASKQGVRFVFSDGSRIIFRLSGTGSAGATVRIYIEQFEPDVSKHDMDAQIALKPLIDLALSVSKLKDFTGREKPTVIT</sequence>
<organism>
    <name type="scientific">Solanum tuberosum</name>
    <name type="common">Potato</name>
    <dbReference type="NCBI Taxonomy" id="4113"/>
    <lineage>
        <taxon>Eukaryota</taxon>
        <taxon>Viridiplantae</taxon>
        <taxon>Streptophyta</taxon>
        <taxon>Embryophyta</taxon>
        <taxon>Tracheophyta</taxon>
        <taxon>Spermatophyta</taxon>
        <taxon>Magnoliopsida</taxon>
        <taxon>eudicotyledons</taxon>
        <taxon>Gunneridae</taxon>
        <taxon>Pentapetalae</taxon>
        <taxon>asterids</taxon>
        <taxon>lamiids</taxon>
        <taxon>Solanales</taxon>
        <taxon>Solanaceae</taxon>
        <taxon>Solanoideae</taxon>
        <taxon>Solaneae</taxon>
        <taxon>Solanum</taxon>
    </lineage>
</organism>
<evidence type="ECO:0000250" key="1">
    <source>
        <dbReference type="UniProtKB" id="P00949"/>
    </source>
</evidence>
<evidence type="ECO:0000250" key="2">
    <source>
        <dbReference type="UniProtKB" id="P36871"/>
    </source>
</evidence>
<evidence type="ECO:0000250" key="3">
    <source>
        <dbReference type="UniProtKB" id="Q9SCY0"/>
    </source>
</evidence>
<evidence type="ECO:0000255" key="4"/>
<evidence type="ECO:0000305" key="5"/>
<proteinExistence type="evidence at transcript level"/>
<gene>
    <name type="primary">PGMP</name>
    <name type="synonym">PGM II</name>
</gene>
<feature type="transit peptide" description="Chloroplast" evidence="4">
    <location>
        <begin position="1"/>
        <end position="72"/>
    </location>
</feature>
<feature type="chain" id="PRO_0000023898" description="Phosphoglucomutase, chloroplastic">
    <location>
        <begin position="73"/>
        <end position="632"/>
    </location>
</feature>
<feature type="active site" description="Phosphoserine intermediate" evidence="1">
    <location>
        <position position="190"/>
    </location>
</feature>
<feature type="binding site" evidence="1">
    <location>
        <position position="97"/>
    </location>
    <ligand>
        <name>alpha-D-glucose 1,6-bisphosphate</name>
        <dbReference type="ChEBI" id="CHEBI:58392"/>
    </ligand>
</feature>
<feature type="binding site" evidence="1">
    <location>
        <position position="190"/>
    </location>
    <ligand>
        <name>alpha-D-glucose 1,6-bisphosphate</name>
        <dbReference type="ChEBI" id="CHEBI:58392"/>
    </ligand>
</feature>
<feature type="binding site" description="via phosphate group" evidence="1">
    <location>
        <position position="190"/>
    </location>
    <ligand>
        <name>Mg(2+)</name>
        <dbReference type="ChEBI" id="CHEBI:18420"/>
    </ligand>
</feature>
<feature type="binding site" evidence="1">
    <location>
        <position position="355"/>
    </location>
    <ligand>
        <name>Mg(2+)</name>
        <dbReference type="ChEBI" id="CHEBI:18420"/>
    </ligand>
</feature>
<feature type="binding site" evidence="1">
    <location>
        <position position="357"/>
    </location>
    <ligand>
        <name>Mg(2+)</name>
        <dbReference type="ChEBI" id="CHEBI:18420"/>
    </ligand>
</feature>
<feature type="binding site" evidence="1">
    <location>
        <position position="359"/>
    </location>
    <ligand>
        <name>alpha-D-glucose 1,6-bisphosphate</name>
        <dbReference type="ChEBI" id="CHEBI:58392"/>
    </ligand>
</feature>
<feature type="binding site" evidence="1">
    <location>
        <position position="359"/>
    </location>
    <ligand>
        <name>Mg(2+)</name>
        <dbReference type="ChEBI" id="CHEBI:18420"/>
    </ligand>
</feature>
<feature type="binding site" evidence="1">
    <location>
        <position position="360"/>
    </location>
    <ligand>
        <name>alpha-D-glucose 1,6-bisphosphate</name>
        <dbReference type="ChEBI" id="CHEBI:58392"/>
    </ligand>
</feature>
<feature type="binding site" evidence="1">
    <location>
        <position position="423"/>
    </location>
    <ligand>
        <name>alpha-D-glucose 1,6-bisphosphate</name>
        <dbReference type="ChEBI" id="CHEBI:58392"/>
    </ligand>
</feature>
<feature type="binding site" evidence="1">
    <location>
        <position position="442"/>
    </location>
    <ligand>
        <name>alpha-D-glucose 1,6-bisphosphate</name>
        <dbReference type="ChEBI" id="CHEBI:58392"/>
    </ligand>
</feature>
<feature type="binding site" evidence="1">
    <location>
        <position position="444"/>
    </location>
    <ligand>
        <name>alpha-D-glucose 1,6-bisphosphate</name>
        <dbReference type="ChEBI" id="CHEBI:58392"/>
    </ligand>
</feature>
<feature type="binding site" evidence="1">
    <location>
        <position position="455"/>
    </location>
    <ligand>
        <name>alpha-D-glucose 1,6-bisphosphate</name>
        <dbReference type="ChEBI" id="CHEBI:58392"/>
    </ligand>
</feature>
<feature type="modified residue" description="Phosphoserine" evidence="1">
    <location>
        <position position="190"/>
    </location>
</feature>